<keyword id="KW-0012">Acyltransferase</keyword>
<keyword id="KW-0028">Amino-acid biosynthesis</keyword>
<keyword id="KW-0963">Cytoplasm</keyword>
<keyword id="KW-0486">Methionine biosynthesis</keyword>
<keyword id="KW-0808">Transferase</keyword>
<protein>
    <recommendedName>
        <fullName evidence="1">Homoserine O-acetyltransferase</fullName>
        <shortName evidence="1">HAT</shortName>
        <ecNumber evidence="1">2.3.1.31</ecNumber>
    </recommendedName>
    <alternativeName>
        <fullName evidence="1">Homoserine transacetylase</fullName>
        <shortName evidence="1">HTA</shortName>
    </alternativeName>
</protein>
<comment type="function">
    <text evidence="1">Transfers an acetyl group from acetyl-CoA to L-homoserine, forming acetyl-L-homoserine.</text>
</comment>
<comment type="catalytic activity">
    <reaction evidence="1">
        <text>L-homoserine + acetyl-CoA = O-acetyl-L-homoserine + CoA</text>
        <dbReference type="Rhea" id="RHEA:13701"/>
        <dbReference type="ChEBI" id="CHEBI:57287"/>
        <dbReference type="ChEBI" id="CHEBI:57288"/>
        <dbReference type="ChEBI" id="CHEBI:57476"/>
        <dbReference type="ChEBI" id="CHEBI:57716"/>
        <dbReference type="EC" id="2.3.1.31"/>
    </reaction>
</comment>
<comment type="pathway">
    <text evidence="1">Amino-acid biosynthesis; L-methionine biosynthesis via de novo pathway; O-acetyl-L-homoserine from L-homoserine: step 1/1.</text>
</comment>
<comment type="subunit">
    <text evidence="1">Homodimer.</text>
</comment>
<comment type="subcellular location">
    <subcellularLocation>
        <location evidence="1">Cytoplasm</location>
    </subcellularLocation>
</comment>
<comment type="similarity">
    <text evidence="1">Belongs to the AB hydrolase superfamily. MetX family.</text>
</comment>
<feature type="chain" id="PRO_0000155742" description="Homoserine O-acetyltransferase">
    <location>
        <begin position="1"/>
        <end position="400"/>
    </location>
</feature>
<feature type="domain" description="AB hydrolase-1" evidence="1">
    <location>
        <begin position="64"/>
        <end position="374"/>
    </location>
</feature>
<feature type="active site" description="Nucleophile" evidence="1">
    <location>
        <position position="169"/>
    </location>
</feature>
<feature type="active site" evidence="1">
    <location>
        <position position="335"/>
    </location>
</feature>
<feature type="active site" evidence="1">
    <location>
        <position position="368"/>
    </location>
</feature>
<feature type="binding site" evidence="1">
    <location>
        <position position="239"/>
    </location>
    <ligand>
        <name>substrate</name>
    </ligand>
</feature>
<feature type="binding site" evidence="1">
    <location>
        <position position="369"/>
    </location>
    <ligand>
        <name>substrate</name>
    </ligand>
</feature>
<name>METXA_RHOPA</name>
<proteinExistence type="inferred from homology"/>
<organism>
    <name type="scientific">Rhodopseudomonas palustris (strain ATCC BAA-98 / CGA009)</name>
    <dbReference type="NCBI Taxonomy" id="258594"/>
    <lineage>
        <taxon>Bacteria</taxon>
        <taxon>Pseudomonadati</taxon>
        <taxon>Pseudomonadota</taxon>
        <taxon>Alphaproteobacteria</taxon>
        <taxon>Hyphomicrobiales</taxon>
        <taxon>Nitrobacteraceae</taxon>
        <taxon>Rhodopseudomonas</taxon>
    </lineage>
</organism>
<sequence length="400" mass="43777">MMNIHSVKGQKIAAGERTQEVDHPHSLVAQFGADQPLPLDCGIELSPFQIAYQTYGTLNADKSNAILVCHALTMDQHIANVHPITGKPGGWLTLVGPGKPIDTDRYFVICSNVIGGCMGSTGPASINPATGKAWGLDFPVITIPDMVRAQAMLIDRFGIDKLFCVVGGSMGGMQVLQWSVAFPERVFSALAIACATRHSAQNIAFHELGRQAVMADPDWQHGRYFEHGCFPHRGLAVARMAAHITYLSDAALHRKFGRKMQDRELPTFSFDADFQVESYLRYQGSSFVERFDANSYLYLTRAMDYFDIAADHDGVLAAAFRGTQTRFCVVSFTSDWLFPTSESRAIVHALNAGGARVSFAEIVTDKGHDAFLLDEPEFIDIARAFLQSAGTARGLGKAEH</sequence>
<accession>Q6N1G8</accession>
<dbReference type="EC" id="2.3.1.31" evidence="1"/>
<dbReference type="EMBL" id="BX572607">
    <property type="protein sequence ID" value="CAE29878.1"/>
    <property type="molecule type" value="Genomic_DNA"/>
</dbReference>
<dbReference type="RefSeq" id="WP_011159971.1">
    <property type="nucleotide sequence ID" value="NZ_CP116810.1"/>
</dbReference>
<dbReference type="SMR" id="Q6N1G8"/>
<dbReference type="STRING" id="258594.RPA4437"/>
<dbReference type="ESTHER" id="rhopa-metx">
    <property type="family name" value="Homoserine_transacetylase"/>
</dbReference>
<dbReference type="GeneID" id="66895578"/>
<dbReference type="eggNOG" id="COG2021">
    <property type="taxonomic scope" value="Bacteria"/>
</dbReference>
<dbReference type="HOGENOM" id="CLU_028760_1_2_5"/>
<dbReference type="PhylomeDB" id="Q6N1G8"/>
<dbReference type="UniPathway" id="UPA00051">
    <property type="reaction ID" value="UER00074"/>
</dbReference>
<dbReference type="GO" id="GO:0005737">
    <property type="term" value="C:cytoplasm"/>
    <property type="evidence" value="ECO:0007669"/>
    <property type="project" value="UniProtKB-SubCell"/>
</dbReference>
<dbReference type="GO" id="GO:0004414">
    <property type="term" value="F:homoserine O-acetyltransferase activity"/>
    <property type="evidence" value="ECO:0007669"/>
    <property type="project" value="UniProtKB-UniRule"/>
</dbReference>
<dbReference type="GO" id="GO:0009092">
    <property type="term" value="P:homoserine metabolic process"/>
    <property type="evidence" value="ECO:0007669"/>
    <property type="project" value="TreeGrafter"/>
</dbReference>
<dbReference type="GO" id="GO:0009086">
    <property type="term" value="P:methionine biosynthetic process"/>
    <property type="evidence" value="ECO:0007669"/>
    <property type="project" value="UniProtKB-UniRule"/>
</dbReference>
<dbReference type="FunFam" id="1.10.1740.110:FF:000001">
    <property type="entry name" value="Homoserine O-acetyltransferase"/>
    <property type="match status" value="1"/>
</dbReference>
<dbReference type="Gene3D" id="1.10.1740.110">
    <property type="match status" value="1"/>
</dbReference>
<dbReference type="Gene3D" id="3.40.50.1820">
    <property type="entry name" value="alpha/beta hydrolase"/>
    <property type="match status" value="1"/>
</dbReference>
<dbReference type="HAMAP" id="MF_00296">
    <property type="entry name" value="MetX_acyltransf"/>
    <property type="match status" value="1"/>
</dbReference>
<dbReference type="InterPro" id="IPR000073">
    <property type="entry name" value="AB_hydrolase_1"/>
</dbReference>
<dbReference type="InterPro" id="IPR029058">
    <property type="entry name" value="AB_hydrolase_fold"/>
</dbReference>
<dbReference type="InterPro" id="IPR008220">
    <property type="entry name" value="HAT_MetX-like"/>
</dbReference>
<dbReference type="NCBIfam" id="TIGR01392">
    <property type="entry name" value="homoserO_Ac_trn"/>
    <property type="match status" value="1"/>
</dbReference>
<dbReference type="NCBIfam" id="NF001209">
    <property type="entry name" value="PRK00175.1"/>
    <property type="match status" value="1"/>
</dbReference>
<dbReference type="PANTHER" id="PTHR32268">
    <property type="entry name" value="HOMOSERINE O-ACETYLTRANSFERASE"/>
    <property type="match status" value="1"/>
</dbReference>
<dbReference type="PANTHER" id="PTHR32268:SF11">
    <property type="entry name" value="HOMOSERINE O-ACETYLTRANSFERASE"/>
    <property type="match status" value="1"/>
</dbReference>
<dbReference type="Pfam" id="PF00561">
    <property type="entry name" value="Abhydrolase_1"/>
    <property type="match status" value="1"/>
</dbReference>
<dbReference type="PIRSF" id="PIRSF000443">
    <property type="entry name" value="Homoser_Ac_trans"/>
    <property type="match status" value="1"/>
</dbReference>
<dbReference type="SUPFAM" id="SSF53474">
    <property type="entry name" value="alpha/beta-Hydrolases"/>
    <property type="match status" value="1"/>
</dbReference>
<gene>
    <name evidence="1" type="primary">metXA</name>
    <name type="ordered locus">RPA4437</name>
</gene>
<reference key="1">
    <citation type="journal article" date="2004" name="Nat. Biotechnol.">
        <title>Complete genome sequence of the metabolically versatile photosynthetic bacterium Rhodopseudomonas palustris.</title>
        <authorList>
            <person name="Larimer F.W."/>
            <person name="Chain P."/>
            <person name="Hauser L."/>
            <person name="Lamerdin J.E."/>
            <person name="Malfatti S."/>
            <person name="Do L."/>
            <person name="Land M.L."/>
            <person name="Pelletier D.A."/>
            <person name="Beatty J.T."/>
            <person name="Lang A.S."/>
            <person name="Tabita F.R."/>
            <person name="Gibson J.L."/>
            <person name="Hanson T.E."/>
            <person name="Bobst C."/>
            <person name="Torres y Torres J.L."/>
            <person name="Peres C."/>
            <person name="Harrison F.H."/>
            <person name="Gibson J."/>
            <person name="Harwood C.S."/>
        </authorList>
    </citation>
    <scope>NUCLEOTIDE SEQUENCE [LARGE SCALE GENOMIC DNA]</scope>
    <source>
        <strain>ATCC BAA-98 / CGA009</strain>
    </source>
</reference>
<evidence type="ECO:0000255" key="1">
    <source>
        <dbReference type="HAMAP-Rule" id="MF_00296"/>
    </source>
</evidence>